<gene>
    <name evidence="7" type="primary">doxa-1</name>
    <name evidence="7" type="ORF">C06E1.3</name>
</gene>
<organism>
    <name type="scientific">Caenorhabditis elegans</name>
    <dbReference type="NCBI Taxonomy" id="6239"/>
    <lineage>
        <taxon>Eukaryota</taxon>
        <taxon>Metazoa</taxon>
        <taxon>Ecdysozoa</taxon>
        <taxon>Nematoda</taxon>
        <taxon>Chromadorea</taxon>
        <taxon>Rhabditida</taxon>
        <taxon>Rhabditina</taxon>
        <taxon>Rhabditomorpha</taxon>
        <taxon>Rhabditoidea</taxon>
        <taxon>Rhabditidae</taxon>
        <taxon>Peloderinae</taxon>
        <taxon>Caenorhabditis</taxon>
    </lineage>
</organism>
<feature type="chain" id="PRO_0000065156" description="Dual oxidase maturation factor 1" evidence="6">
    <location>
        <begin position="1"/>
        <end position="397"/>
    </location>
</feature>
<feature type="transmembrane region" description="Helical" evidence="1">
    <location>
        <begin position="26"/>
        <end position="46"/>
    </location>
</feature>
<feature type="transmembrane region" description="Helical" evidence="1">
    <location>
        <begin position="57"/>
        <end position="77"/>
    </location>
</feature>
<feature type="transmembrane region" description="Helical" evidence="1">
    <location>
        <begin position="191"/>
        <end position="211"/>
    </location>
</feature>
<feature type="transmembrane region" description="Helical" evidence="1">
    <location>
        <begin position="218"/>
        <end position="238"/>
    </location>
</feature>
<feature type="transmembrane region" description="Helical" evidence="1">
    <location>
        <begin position="261"/>
        <end position="281"/>
    </location>
</feature>
<feature type="region of interest" description="Disordered" evidence="2">
    <location>
        <begin position="324"/>
        <end position="376"/>
    </location>
</feature>
<feature type="compositionally biased region" description="Polar residues" evidence="2">
    <location>
        <begin position="341"/>
        <end position="350"/>
    </location>
</feature>
<feature type="compositionally biased region" description="Low complexity" evidence="2">
    <location>
        <begin position="351"/>
        <end position="370"/>
    </location>
</feature>
<feature type="glycosylation site" description="N-linked (GlcNAc...) asparagine" evidence="1">
    <location>
        <position position="109"/>
    </location>
</feature>
<feature type="glycosylation site" description="N-linked (GlcNAc...) asparagine" evidence="1">
    <location>
        <position position="327"/>
    </location>
</feature>
<feature type="glycosylation site" description="N-linked (GlcNAc...) asparagine" evidence="1">
    <location>
        <position position="330"/>
    </location>
</feature>
<feature type="mutagenesis site" description="In transgene rescue experiments with doxa-1 loss-of-function mutant, results in reduced capacity of the transgene to revert increased survival in excess iodide, an oxidative stressor." evidence="5">
    <original>T</original>
    <variation>A</variation>
    <location>
        <position position="343"/>
    </location>
</feature>
<proteinExistence type="evidence at protein level"/>
<reference key="1">
    <citation type="journal article" date="1994" name="Nature">
        <title>2.2 Mb of contiguous nucleotide sequence from chromosome III of C. elegans.</title>
        <authorList>
            <person name="Wilson R."/>
            <person name="Ainscough R."/>
            <person name="Anderson K."/>
            <person name="Baynes C."/>
            <person name="Berks M."/>
            <person name="Bonfield J."/>
            <person name="Burton J."/>
            <person name="Connell M."/>
            <person name="Copsey T."/>
            <person name="Cooper J."/>
            <person name="Coulson A."/>
            <person name="Craxton M."/>
            <person name="Dear S."/>
            <person name="Du Z."/>
            <person name="Durbin R."/>
            <person name="Favello A."/>
            <person name="Fraser A."/>
            <person name="Fulton L."/>
            <person name="Gardner A."/>
            <person name="Green P."/>
            <person name="Hawkins T."/>
            <person name="Hillier L."/>
            <person name="Jier M."/>
            <person name="Johnston L."/>
            <person name="Jones M."/>
            <person name="Kershaw J."/>
            <person name="Kirsten J."/>
            <person name="Laisster N."/>
            <person name="Latreille P."/>
            <person name="Lightning J."/>
            <person name="Lloyd C."/>
            <person name="Mortimore B."/>
            <person name="O'Callaghan M."/>
            <person name="Parsons J."/>
            <person name="Percy C."/>
            <person name="Rifken L."/>
            <person name="Roopra A."/>
            <person name="Saunders D."/>
            <person name="Shownkeen R."/>
            <person name="Sims M."/>
            <person name="Smaldon N."/>
            <person name="Smith A."/>
            <person name="Smith M."/>
            <person name="Sonnhammer E."/>
            <person name="Staden R."/>
            <person name="Sulston J."/>
            <person name="Thierry-Mieg J."/>
            <person name="Thomas K."/>
            <person name="Vaudin M."/>
            <person name="Vaughan K."/>
            <person name="Waterston R."/>
            <person name="Watson A."/>
            <person name="Weinstock L."/>
            <person name="Wilkinson-Sproat J."/>
            <person name="Wohldman P."/>
        </authorList>
    </citation>
    <scope>NUCLEOTIDE SEQUENCE [LARGE SCALE GENOMIC DNA]</scope>
    <source>
        <strain>Bristol N2</strain>
    </source>
</reference>
<reference key="2">
    <citation type="journal article" date="1998" name="Science">
        <title>Genome sequence of the nematode C. elegans: a platform for investigating biology.</title>
        <authorList>
            <consortium name="The C. elegans sequencing consortium"/>
        </authorList>
    </citation>
    <scope>NUCLEOTIDE SEQUENCE [LARGE SCALE GENOMIC DNA]</scope>
    <source>
        <strain>Bristol N2</strain>
    </source>
</reference>
<reference key="3">
    <citation type="journal article" date="2012" name="PLoS Genet.">
        <title>Tetraspanin is required for generation of reactive oxygen species by the dual oxidase system in Caenorhabditis elegans.</title>
        <authorList>
            <person name="Moribe H."/>
            <person name="Konakawa R."/>
            <person name="Koga D."/>
            <person name="Ushiki T."/>
            <person name="Nakamura K."/>
            <person name="Mekada E."/>
        </authorList>
    </citation>
    <scope>FUNCTION</scope>
    <scope>INTERACTION WITH BLI-3 AND TSP-15</scope>
    <scope>TISSUE SPECIFICITY</scope>
</reference>
<reference key="4">
    <citation type="journal article" date="2015" name="G3 (Bethesda)">
        <title>The BLI-3/TSP-15/DOXA-1 dual oxidase complex is required for iodide toxicity in Caenorhabditis elegans.</title>
        <authorList>
            <person name="Xu Z."/>
            <person name="Luo J."/>
            <person name="Li Y."/>
            <person name="Ma L."/>
        </authorList>
    </citation>
    <scope>FUNCTION</scope>
    <scope>DISRUPTION PHENOTYPE</scope>
</reference>
<reference key="5">
    <citation type="journal article" date="2023" name="PLoS Genet.">
        <title>Casein kinase 1 gamma regulates oxidative stress response via interacting with the NADPH dual oxidase complex.</title>
        <authorList>
            <person name="Hu Y."/>
            <person name="Xu Z."/>
            <person name="Pan Q."/>
            <person name="Ma L."/>
        </authorList>
    </citation>
    <scope>INTERACTION WITH CSNK-1</scope>
    <scope>MUTAGENESIS OF THR-343</scope>
</reference>
<sequence>MWWFGGNPSPSDYPNAAIPNFNMHAFVIFSVFLIPLIAYILILPGVRRKRVVTTVTYVLMLAVGGALIASLIYPCWASGSQMIYTQFRGHSNERILAKIGVEIGLQKVNVTLKFERLLSSNDVLPGSDMTELYYNEGFDISGISSMAEALHHGLENGLPYPMLSVLEYFSLNQDSFDWGRHYRVAGHYTHAAIWFAFACWCLSVVLMLFLPHNAYKSILATGISCLIACLVYLLLSPCELRIAFTGENFERVDLTATFSFCFYLIFAIGILCVLCGLGLGICEHWRIYTLSTFLDASLDEHVGPKWKKLPTGGPALQGVQIGAYGTNTTNSSRDKNDISSDKTAGSSGFQSRTSTCQSSASSASLRSQSSIETVHDEAELERTHVHFLQEPCSSSST</sequence>
<protein>
    <recommendedName>
        <fullName evidence="7">Dual oxidase maturation factor 1</fullName>
    </recommendedName>
</protein>
<accession>P34298</accession>
<keyword id="KW-0325">Glycoprotein</keyword>
<keyword id="KW-0472">Membrane</keyword>
<keyword id="KW-1185">Reference proteome</keyword>
<keyword id="KW-0812">Transmembrane</keyword>
<keyword id="KW-1133">Transmembrane helix</keyword>
<comment type="function">
    <text evidence="3 4">Plays a role in cuticle biogenesis (PubMed:23028364, PubMed:25480962). In complex with tsp-15 and the dual oxidase bli-3, promotes the generation of reactive oxygen species (ROS) and tyrosine cross-linking of collagen, thus stabilizing cuticular extracellular matrix (PubMed:23028364).</text>
</comment>
<comment type="subunit">
    <text evidence="3 5">Interacts with bli-3 and tsp-15 (PubMed:23028364). Interacts with csnk-1 (PubMed:37099597).</text>
</comment>
<comment type="subcellular location">
    <subcellularLocation>
        <location evidence="6">Membrane</location>
        <topology evidence="6">Multi-pass membrane protein</topology>
    </subcellularLocation>
</comment>
<comment type="tissue specificity">
    <text evidence="3">Expressed in the hypodermis, specifically in seam cells, the terminal bulb of the pharynx, the distal region of the gonadal arm, vulva, spermatheca and uterus.</text>
</comment>
<comment type="disruption phenotype">
    <text evidence="4">RNAi-mediated knockdown results in a blistered cuticle phenotype and resistance to iodide toxicity.</text>
</comment>
<comment type="similarity">
    <text evidence="6">Belongs to the DUOXA family.</text>
</comment>
<name>DOXA1_CAEEL</name>
<evidence type="ECO:0000255" key="1"/>
<evidence type="ECO:0000256" key="2">
    <source>
        <dbReference type="SAM" id="MobiDB-lite"/>
    </source>
</evidence>
<evidence type="ECO:0000269" key="3">
    <source>
    </source>
</evidence>
<evidence type="ECO:0000269" key="4">
    <source>
    </source>
</evidence>
<evidence type="ECO:0000269" key="5">
    <source>
    </source>
</evidence>
<evidence type="ECO:0000305" key="6"/>
<evidence type="ECO:0000312" key="7">
    <source>
        <dbReference type="WormBase" id="C06E1.3"/>
    </source>
</evidence>
<dbReference type="EMBL" id="FO080280">
    <property type="protein sequence ID" value="CCD62563.1"/>
    <property type="molecule type" value="Genomic_DNA"/>
</dbReference>
<dbReference type="PIR" id="A88533">
    <property type="entry name" value="A88533"/>
</dbReference>
<dbReference type="RefSeq" id="NP_498886.2">
    <property type="nucleotide sequence ID" value="NM_066485.5"/>
</dbReference>
<dbReference type="SMR" id="P34298"/>
<dbReference type="BioGRID" id="47168">
    <property type="interactions" value="1"/>
</dbReference>
<dbReference type="ComplexPortal" id="CPX-1020">
    <property type="entry name" value="BLI-3/DOXA-1/TSP-15 dual oxidase complex"/>
</dbReference>
<dbReference type="FunCoup" id="P34298">
    <property type="interactions" value="14"/>
</dbReference>
<dbReference type="STRING" id="6239.C06E1.3.1"/>
<dbReference type="GlyCosmos" id="P34298">
    <property type="glycosylation" value="3 sites, No reported glycans"/>
</dbReference>
<dbReference type="PaxDb" id="6239-C06E1.3"/>
<dbReference type="EnsemblMetazoa" id="C06E1.3.1">
    <property type="protein sequence ID" value="C06E1.3.1"/>
    <property type="gene ID" value="WBGene00015519"/>
</dbReference>
<dbReference type="GeneID" id="182313"/>
<dbReference type="KEGG" id="cel:CELE_C06E1.3"/>
<dbReference type="UCSC" id="C06E1.3">
    <property type="organism name" value="c. elegans"/>
</dbReference>
<dbReference type="AGR" id="WB:WBGene00015519"/>
<dbReference type="CTD" id="182313"/>
<dbReference type="WormBase" id="C06E1.3">
    <property type="protein sequence ID" value="CE30481"/>
    <property type="gene ID" value="WBGene00015519"/>
    <property type="gene designation" value="doxa-1"/>
</dbReference>
<dbReference type="eggNOG" id="KOG3921">
    <property type="taxonomic scope" value="Eukaryota"/>
</dbReference>
<dbReference type="GeneTree" id="ENSGT00390000008240"/>
<dbReference type="HOGENOM" id="CLU_694896_0_0_1"/>
<dbReference type="InParanoid" id="P34298"/>
<dbReference type="OMA" id="MHAFVIF"/>
<dbReference type="OrthoDB" id="10042652at2759"/>
<dbReference type="PhylomeDB" id="P34298"/>
<dbReference type="PRO" id="PR:P34298"/>
<dbReference type="Proteomes" id="UP000001940">
    <property type="component" value="Chromosome III"/>
</dbReference>
<dbReference type="Bgee" id="WBGene00015519">
    <property type="expression patterns" value="Expressed in larva and 3 other cell types or tissues"/>
</dbReference>
<dbReference type="GO" id="GO:0005789">
    <property type="term" value="C:endoplasmic reticulum membrane"/>
    <property type="evidence" value="ECO:0007669"/>
    <property type="project" value="InterPro"/>
</dbReference>
<dbReference type="GO" id="GO:0016020">
    <property type="term" value="C:membrane"/>
    <property type="evidence" value="ECO:0000318"/>
    <property type="project" value="GO_Central"/>
</dbReference>
<dbReference type="GO" id="GO:1990204">
    <property type="term" value="C:oxidoreductase complex"/>
    <property type="evidence" value="ECO:0000314"/>
    <property type="project" value="ComplexPortal"/>
</dbReference>
<dbReference type="GO" id="GO:0005886">
    <property type="term" value="C:plasma membrane"/>
    <property type="evidence" value="ECO:0000314"/>
    <property type="project" value="ComplexPortal"/>
</dbReference>
<dbReference type="GO" id="GO:0040002">
    <property type="term" value="P:collagen and cuticulin-based cuticle development"/>
    <property type="evidence" value="ECO:0000314"/>
    <property type="project" value="ComplexPortal"/>
</dbReference>
<dbReference type="GO" id="GO:0015031">
    <property type="term" value="P:protein transport"/>
    <property type="evidence" value="ECO:0007669"/>
    <property type="project" value="InterPro"/>
</dbReference>
<dbReference type="InterPro" id="IPR018469">
    <property type="entry name" value="Dual_oxidase_maturation_fac"/>
</dbReference>
<dbReference type="PANTHER" id="PTHR31158:SF1">
    <property type="entry name" value="DOXA1 FACTOR-RELATED"/>
    <property type="match status" value="1"/>
</dbReference>
<dbReference type="PANTHER" id="PTHR31158">
    <property type="entry name" value="DUAL OXIDASE 2"/>
    <property type="match status" value="1"/>
</dbReference>
<dbReference type="Pfam" id="PF10204">
    <property type="entry name" value="DuoxA"/>
    <property type="match status" value="1"/>
</dbReference>